<organism>
    <name type="scientific">Cavia porcellus</name>
    <name type="common">Guinea pig</name>
    <dbReference type="NCBI Taxonomy" id="10141"/>
    <lineage>
        <taxon>Eukaryota</taxon>
        <taxon>Metazoa</taxon>
        <taxon>Chordata</taxon>
        <taxon>Craniata</taxon>
        <taxon>Vertebrata</taxon>
        <taxon>Euteleostomi</taxon>
        <taxon>Mammalia</taxon>
        <taxon>Eutheria</taxon>
        <taxon>Euarchontoglires</taxon>
        <taxon>Glires</taxon>
        <taxon>Rodentia</taxon>
        <taxon>Hystricomorpha</taxon>
        <taxon>Caviidae</taxon>
        <taxon>Cavia</taxon>
    </lineage>
</organism>
<protein>
    <recommendedName>
        <fullName>Potassium channel subfamily K member 1</fullName>
    </recommendedName>
    <alternativeName>
        <fullName>Inward rectifying potassium channel protein TWIK-1</fullName>
    </alternativeName>
</protein>
<proteinExistence type="evidence at transcript level"/>
<gene>
    <name evidence="5" type="primary">KCNK1</name>
</gene>
<feature type="chain" id="PRO_0000299069" description="Potassium channel subfamily K member 1">
    <location>
        <begin position="1"/>
        <end position="336"/>
    </location>
</feature>
<feature type="topological domain" description="Cytoplasmic" evidence="1">
    <location>
        <begin position="1"/>
        <end position="20"/>
    </location>
</feature>
<feature type="transmembrane region" description="Helical" evidence="1">
    <location>
        <begin position="21"/>
        <end position="41"/>
    </location>
</feature>
<feature type="topological domain" description="Extracellular" evidence="1">
    <location>
        <begin position="42"/>
        <end position="103"/>
    </location>
</feature>
<feature type="intramembrane region" description="Helical; Name=Pore helix 1" evidence="1">
    <location>
        <begin position="104"/>
        <end position="116"/>
    </location>
</feature>
<feature type="intramembrane region" evidence="1">
    <location>
        <begin position="117"/>
        <end position="122"/>
    </location>
</feature>
<feature type="topological domain" description="Extracellular" evidence="1">
    <location>
        <begin position="123"/>
        <end position="132"/>
    </location>
</feature>
<feature type="transmembrane region" description="Helical" evidence="1">
    <location>
        <begin position="133"/>
        <end position="156"/>
    </location>
</feature>
<feature type="topological domain" description="Cytoplasmic" evidence="1">
    <location>
        <begin position="157"/>
        <end position="181"/>
    </location>
</feature>
<feature type="transmembrane region" description="Helical" evidence="1">
    <location>
        <begin position="182"/>
        <end position="202"/>
    </location>
</feature>
<feature type="topological domain" description="Extracellular" evidence="1">
    <location>
        <begin position="203"/>
        <end position="211"/>
    </location>
</feature>
<feature type="intramembrane region" description="Helical; Name=Pore helix 2" evidence="1">
    <location>
        <begin position="212"/>
        <end position="224"/>
    </location>
</feature>
<feature type="intramembrane region" evidence="1">
    <location>
        <begin position="225"/>
        <end position="231"/>
    </location>
</feature>
<feature type="topological domain" description="Extracellular" evidence="1">
    <location>
        <begin position="232"/>
        <end position="243"/>
    </location>
</feature>
<feature type="transmembrane region" description="Helical" evidence="1">
    <location>
        <begin position="244"/>
        <end position="267"/>
    </location>
</feature>
<feature type="topological domain" description="Cytoplasmic" evidence="1">
    <location>
        <begin position="268"/>
        <end position="336"/>
    </location>
</feature>
<feature type="region of interest" description="Selectivity filter 1" evidence="1">
    <location>
        <begin position="117"/>
        <end position="122"/>
    </location>
</feature>
<feature type="region of interest" description="Selectivity filter 2" evidence="1">
    <location>
        <begin position="225"/>
        <end position="230"/>
    </location>
</feature>
<feature type="region of interest" description="Important for intracellular retention in recycling endosomes" evidence="1">
    <location>
        <begin position="293"/>
        <end position="299"/>
    </location>
</feature>
<feature type="site" description="Important for increased permeability to Na(+) when K(+) levels are subphysiological" evidence="1">
    <location>
        <position position="118"/>
    </location>
</feature>
<feature type="site" description="Part of a hydrophobic barrier that is stochastically dewetted and limits ion permeability" evidence="1">
    <location>
        <position position="146"/>
    </location>
</feature>
<feature type="site" description="Part of a hydrophobic barrier that is stochastically dewetted and limits ion permeability" evidence="1">
    <location>
        <position position="261"/>
    </location>
</feature>
<feature type="glycosylation site" description="N-linked (GlcNAc...) asparagine" evidence="4">
    <location>
        <position position="95"/>
    </location>
</feature>
<feature type="disulfide bond" description="Interchain" evidence="1">
    <location>
        <position position="69"/>
    </location>
</feature>
<feature type="cross-link" description="Glycyl lysine isopeptide (Lys-Gly) (interchain with G-Cter in SUMO)" evidence="1">
    <location>
        <position position="274"/>
    </location>
</feature>
<reference evidence="5" key="1">
    <citation type="submission" date="2002-01" db="EMBL/GenBank/DDBJ databases">
        <title>Cloning and sequencing of guinea pig TWIK channels.</title>
        <authorList>
            <person name="Derst C."/>
            <person name="Rajan S."/>
            <person name="Preisig-Mueller R."/>
        </authorList>
    </citation>
    <scope>NUCLEOTIDE SEQUENCE [MRNA]</scope>
</reference>
<name>KCNK1_CAVPO</name>
<comment type="function">
    <text evidence="1 2 3">Ion channel that contributes to passive transmembrane potassium transport and to the regulation of the resting membrane potential in brain astrocytes, but also in kidney and in other tissues. Forms dimeric channels through which potassium ions pass in accordance with their electrochemical gradient. The channel is selective for K(+) ions at physiological potassium concentrations and at neutral pH, but becomes permeable to Na(+) at subphysiological K(+) levels and upon acidification of the extracellular medium. The homodimer has very low potassium channel activity, when expressed in heterologous systems, and can function as weakly inward rectifying potassium channel (By similarity). Channel activity is modulated by activation of serotonin receptors (By similarity). Heterodimeric channels containing KCNK1 and KCNK2 have much higher activity, and may represent the predominant form in astrocytes (By similarity). Heterodimeric channels containing KCNK1 and KCNK3 or KCNK9 have much higher activity. Heterodimeric channels formed by KCNK1 and KCNK9 may contribute to halothane-sensitive currents (By similarity). Mediates outward rectifying potassium currents in dentate gyrus granule cells and contributes to the regulation of their resting membrane potential (By similarity). Contributes to the regulation of action potential firing in dentate gyrus granule cells and down-regulates their intrinsic excitability (By similarity). In astrocytes, the heterodimer formed by KCNK1 and KCNK2 is required for rapid glutamate release in response to activation of G-protein coupled receptors, such as F2R and CNR1 (By similarity). Required for normal ion and water transport in the kidney (By similarity). Contributes to the regulation of the resting membrane potential of pancreatic beta cells (By similarity). The low channel activity of homodimeric KCNK1 may be due to sumoylation. The low channel activity may be due to rapid internalization from the cell membrane and retention in recycling endosomes (By similarity). Permeable to monovalent cations with ion selectivity for K(+) &gt; Rb(+) &gt;&gt; NH4(+) &gt;&gt; Cs(+) = Na(+) = Li(+).</text>
</comment>
<comment type="catalytic activity">
    <reaction evidence="1">
        <text>K(+)(in) = K(+)(out)</text>
        <dbReference type="Rhea" id="RHEA:29463"/>
        <dbReference type="ChEBI" id="CHEBI:29103"/>
    </reaction>
</comment>
<comment type="catalytic activity">
    <reaction evidence="1">
        <text>NH4(+)(in) = NH4(+)(out)</text>
        <dbReference type="Rhea" id="RHEA:28747"/>
        <dbReference type="ChEBI" id="CHEBI:28938"/>
    </reaction>
</comment>
<comment type="catalytic activity">
    <reaction evidence="1">
        <text>Na(+)(in) = Na(+)(out)</text>
        <dbReference type="Rhea" id="RHEA:34963"/>
        <dbReference type="ChEBI" id="CHEBI:29101"/>
    </reaction>
</comment>
<comment type="catalytic activity">
    <reaction evidence="1">
        <text>Rb(+)(in) = Rb(+)(out)</text>
        <dbReference type="Rhea" id="RHEA:78547"/>
        <dbReference type="ChEBI" id="CHEBI:49847"/>
    </reaction>
</comment>
<comment type="catalytic activity">
    <reaction evidence="1">
        <text>Cs(+)(in) = Cs(+)(out)</text>
        <dbReference type="Rhea" id="RHEA:78555"/>
        <dbReference type="ChEBI" id="CHEBI:49547"/>
    </reaction>
</comment>
<comment type="catalytic activity">
    <reaction evidence="1">
        <text>Li(+)(in) = Li(+)(out)</text>
        <dbReference type="Rhea" id="RHEA:78551"/>
        <dbReference type="ChEBI" id="CHEBI:49713"/>
    </reaction>
</comment>
<comment type="catalytic activity">
    <reaction evidence="2">
        <text>L-glutamate(out) = L-glutamate(in)</text>
        <dbReference type="Rhea" id="RHEA:66336"/>
        <dbReference type="ChEBI" id="CHEBI:29985"/>
    </reaction>
</comment>
<comment type="catalytic activity">
    <reaction evidence="2">
        <text>chloride(in) = chloride(out)</text>
        <dbReference type="Rhea" id="RHEA:29823"/>
        <dbReference type="ChEBI" id="CHEBI:17996"/>
    </reaction>
</comment>
<comment type="subunit">
    <text evidence="1 2">Homodimer; disulfide-linked (By similarity). Heterodimer with KCNK2; disulfide-linked (By similarity). In astrocytes, forms mostly heterodimeric potassium channels with KCNK2, with only a minor proportion of functional channels containing homodimeric KCNK1 (By similarity). Interacts with KCNK3 and KCNK9, forming functional heterodimeric channels (By similarity). Interacts with GNG4 (By similarity). Identified in a complex with PSD and ARF6; interacts only with PSD that is bound to ARF6 (By similarity). Interacts with UBE2I (By similarity).</text>
</comment>
<comment type="subcellular location">
    <subcellularLocation>
        <location evidence="1">Cell membrane</location>
        <topology evidence="1">Multi-pass membrane protein</topology>
    </subcellularLocation>
    <subcellularLocation>
        <location evidence="1">Recycling endosome</location>
    </subcellularLocation>
    <subcellularLocation>
        <location evidence="3">Synaptic cell membrane</location>
    </subcellularLocation>
    <subcellularLocation>
        <location evidence="2">Cytoplasmic vesicle</location>
    </subcellularLocation>
    <subcellularLocation>
        <location evidence="2">Perikaryon</location>
    </subcellularLocation>
    <subcellularLocation>
        <location evidence="2">Cell projection</location>
        <location evidence="2">Dendrite</location>
    </subcellularLocation>
    <subcellularLocation>
        <location evidence="2">Cell projection</location>
    </subcellularLocation>
    <subcellularLocation>
        <location evidence="1">Apical cell membrane</location>
        <topology evidence="1">Multi-pass membrane protein</topology>
    </subcellularLocation>
    <text evidence="1 2 3">The heterodimer with KCNK2 is detected at the astrocyte cell membrane. Not detected at the astrocyte cell membrane when KCNK2 is absent. Detected on neuronal cell bodies, and to a lesser degree on neuronal cell projections. Detected on hippocampus dentate gyrus granule cell bodies and to a lesser degree on proximal dendrites. Detected at the apical cell membrane in stria vascularis in the cochlea. Detected at the apical cell membrane of vestibular dark cells situated between the crista and the utricle in the inner ear. Detected at the apical cell membrane in kidney proximal tubule segment S1 and in subapical compartments in segments S1, S2 and S3. Predominantly in cytoplasmic structures in kidney distal convoluted tubules and collecting ducts (By similarity). Detected at the apical cell membrane of bronchial epithelial cells (By similarity).</text>
</comment>
<comment type="PTM">
    <text evidence="1">Sumoylation is controversial. Sumoylated by UBE2I. Not sumoylated when expressed in xenopus oocytes or mammalian cells. Sumoylation inactivates the channel, but does not interfere with expression at the cell membrane. Sumoylation of a single subunit is sufficient to silence the dimeric channel. Sumoylation of KCNK1 is sufficient to silence heterodimeric channels formed by KCNK1 and KCNK3 or KCNK9. Desumoylated by SENP1; this activates the channel. Desumoylated by SENP1; this strongly increases halothane-mediated activation of heterodimeric channels formed with KCNK9. SENP1 treatment has no effect.</text>
</comment>
<comment type="similarity">
    <text evidence="4">Belongs to the two pore domain potassium channel (TC 1.A.1.8) family.</text>
</comment>
<evidence type="ECO:0000250" key="1">
    <source>
        <dbReference type="UniProtKB" id="O00180"/>
    </source>
</evidence>
<evidence type="ECO:0000250" key="2">
    <source>
        <dbReference type="UniProtKB" id="O08581"/>
    </source>
</evidence>
<evidence type="ECO:0000250" key="3">
    <source>
        <dbReference type="UniProtKB" id="Q9Z2T2"/>
    </source>
</evidence>
<evidence type="ECO:0000255" key="4"/>
<evidence type="ECO:0000312" key="5">
    <source>
        <dbReference type="EMBL" id="AAL82795.1"/>
    </source>
</evidence>
<accession>Q8R454</accession>
<sequence length="336" mass="38102">MLQSLAGSSCVRLVERHRSAWCFGLLVLGYLLYLVFGAVVFSSVELPYEDLLRQELRKLKRRFLEEHECLSEPQLEQFLGRVLEASNYGVSVLSNASGNWNWDFTSALFFASTVLSTTGYGHTVPLSDGGKAFCIIYSVIGIPFTLLFLTAVVQRITVHVTRRPVLYFHIRWGFSKQMVGIVHAVVLGFVTVSCFFFIPAAVFSVLEDDWNFLESFYFCFISLSTIGLGDYVPGEGYNQKFRELYKIGITCYLLLGLIAMLVVLETFCELHELKKFRKMFYVKKDKDEDQVHIVEHDQLSFSSITDQAASVKEEQKQSEPFVAAQVSAYAEDSASH</sequence>
<dbReference type="EMBL" id="AY075096">
    <property type="protein sequence ID" value="AAL82795.1"/>
    <property type="molecule type" value="mRNA"/>
</dbReference>
<dbReference type="RefSeq" id="NP_001166447.1">
    <property type="nucleotide sequence ID" value="NM_001172976.1"/>
</dbReference>
<dbReference type="SMR" id="Q8R454"/>
<dbReference type="FunCoup" id="Q8R454">
    <property type="interactions" value="272"/>
</dbReference>
<dbReference type="STRING" id="10141.ENSCPOP00000000966"/>
<dbReference type="GlyCosmos" id="Q8R454">
    <property type="glycosylation" value="1 site, No reported glycans"/>
</dbReference>
<dbReference type="GeneID" id="100135567"/>
<dbReference type="KEGG" id="cpoc:100135567"/>
<dbReference type="CTD" id="3775"/>
<dbReference type="eggNOG" id="KOG1418">
    <property type="taxonomic scope" value="Eukaryota"/>
</dbReference>
<dbReference type="InParanoid" id="Q8R454"/>
<dbReference type="OrthoDB" id="297496at2759"/>
<dbReference type="Proteomes" id="UP000005447">
    <property type="component" value="Unassembled WGS sequence"/>
</dbReference>
<dbReference type="GO" id="GO:0016324">
    <property type="term" value="C:apical plasma membrane"/>
    <property type="evidence" value="ECO:0007669"/>
    <property type="project" value="UniProtKB-SubCell"/>
</dbReference>
<dbReference type="GO" id="GO:0030425">
    <property type="term" value="C:dendrite"/>
    <property type="evidence" value="ECO:0007669"/>
    <property type="project" value="UniProtKB-SubCell"/>
</dbReference>
<dbReference type="GO" id="GO:0016020">
    <property type="term" value="C:membrane"/>
    <property type="evidence" value="ECO:0000250"/>
    <property type="project" value="UniProtKB"/>
</dbReference>
<dbReference type="GO" id="GO:0043204">
    <property type="term" value="C:perikaryon"/>
    <property type="evidence" value="ECO:0007669"/>
    <property type="project" value="UniProtKB-SubCell"/>
</dbReference>
<dbReference type="GO" id="GO:0005886">
    <property type="term" value="C:plasma membrane"/>
    <property type="evidence" value="ECO:0000250"/>
    <property type="project" value="UniProtKB"/>
</dbReference>
<dbReference type="GO" id="GO:0034705">
    <property type="term" value="C:potassium channel complex"/>
    <property type="evidence" value="ECO:0000250"/>
    <property type="project" value="UniProtKB"/>
</dbReference>
<dbReference type="GO" id="GO:0055037">
    <property type="term" value="C:recycling endosome"/>
    <property type="evidence" value="ECO:0007669"/>
    <property type="project" value="UniProtKB-SubCell"/>
</dbReference>
<dbReference type="GO" id="GO:0097060">
    <property type="term" value="C:synaptic membrane"/>
    <property type="evidence" value="ECO:0007669"/>
    <property type="project" value="UniProtKB-SubCell"/>
</dbReference>
<dbReference type="GO" id="GO:0042802">
    <property type="term" value="F:identical protein binding"/>
    <property type="evidence" value="ECO:0000250"/>
    <property type="project" value="UniProtKB"/>
</dbReference>
<dbReference type="GO" id="GO:0022834">
    <property type="term" value="F:ligand-gated channel activity"/>
    <property type="evidence" value="ECO:0000250"/>
    <property type="project" value="UniProtKB"/>
</dbReference>
<dbReference type="GO" id="GO:0015271">
    <property type="term" value="F:outward rectifier potassium channel activity"/>
    <property type="evidence" value="ECO:0007669"/>
    <property type="project" value="TreeGrafter"/>
</dbReference>
<dbReference type="GO" id="GO:0005267">
    <property type="term" value="F:potassium channel activity"/>
    <property type="evidence" value="ECO:0000250"/>
    <property type="project" value="UniProtKB"/>
</dbReference>
<dbReference type="GO" id="GO:0022841">
    <property type="term" value="F:potassium ion leak channel activity"/>
    <property type="evidence" value="ECO:0000250"/>
    <property type="project" value="UniProtKB"/>
</dbReference>
<dbReference type="GO" id="GO:0046982">
    <property type="term" value="F:protein heterodimerization activity"/>
    <property type="evidence" value="ECO:0000250"/>
    <property type="project" value="UniProtKB"/>
</dbReference>
<dbReference type="GO" id="GO:0005272">
    <property type="term" value="F:sodium channel activity"/>
    <property type="evidence" value="ECO:0000250"/>
    <property type="project" value="UniProtKB"/>
</dbReference>
<dbReference type="GO" id="GO:1902476">
    <property type="term" value="P:chloride transmembrane transport"/>
    <property type="evidence" value="ECO:0000250"/>
    <property type="project" value="UniProtKB"/>
</dbReference>
<dbReference type="GO" id="GO:0014047">
    <property type="term" value="P:glutamate secretion"/>
    <property type="evidence" value="ECO:0000250"/>
    <property type="project" value="UniProtKB"/>
</dbReference>
<dbReference type="GO" id="GO:0071805">
    <property type="term" value="P:potassium ion transmembrane transport"/>
    <property type="evidence" value="ECO:0000250"/>
    <property type="project" value="UniProtKB"/>
</dbReference>
<dbReference type="GO" id="GO:0060075">
    <property type="term" value="P:regulation of resting membrane potential"/>
    <property type="evidence" value="ECO:0000250"/>
    <property type="project" value="UniProtKB"/>
</dbReference>
<dbReference type="GO" id="GO:0035725">
    <property type="term" value="P:sodium ion transmembrane transport"/>
    <property type="evidence" value="ECO:0000250"/>
    <property type="project" value="UniProtKB"/>
</dbReference>
<dbReference type="GO" id="GO:0030322">
    <property type="term" value="P:stabilization of membrane potential"/>
    <property type="evidence" value="ECO:0007669"/>
    <property type="project" value="TreeGrafter"/>
</dbReference>
<dbReference type="FunFam" id="1.10.287.70:FF:000076">
    <property type="entry name" value="Potassium channel subfamily K member"/>
    <property type="match status" value="1"/>
</dbReference>
<dbReference type="Gene3D" id="1.10.287.70">
    <property type="match status" value="1"/>
</dbReference>
<dbReference type="InterPro" id="IPR003280">
    <property type="entry name" value="2pore_dom_K_chnl"/>
</dbReference>
<dbReference type="InterPro" id="IPR003092">
    <property type="entry name" value="2pore_dom_K_chnl_TASK"/>
</dbReference>
<dbReference type="InterPro" id="IPR005408">
    <property type="entry name" value="2pore_dom_K_chnl_TWIK"/>
</dbReference>
<dbReference type="InterPro" id="IPR001779">
    <property type="entry name" value="2pore_dom_K_chnl_TWIK1"/>
</dbReference>
<dbReference type="InterPro" id="IPR013099">
    <property type="entry name" value="K_chnl_dom"/>
</dbReference>
<dbReference type="PANTHER" id="PTHR11003:SF59">
    <property type="entry name" value="POTASSIUM CHANNEL SUBFAMILY K MEMBER 1"/>
    <property type="match status" value="1"/>
</dbReference>
<dbReference type="PANTHER" id="PTHR11003">
    <property type="entry name" value="POTASSIUM CHANNEL, SUBFAMILY K"/>
    <property type="match status" value="1"/>
</dbReference>
<dbReference type="Pfam" id="PF07885">
    <property type="entry name" value="Ion_trans_2"/>
    <property type="match status" value="2"/>
</dbReference>
<dbReference type="PIRSF" id="PIRSF038061">
    <property type="entry name" value="K_channel_subfamily_K_type"/>
    <property type="match status" value="1"/>
</dbReference>
<dbReference type="PRINTS" id="PR01333">
    <property type="entry name" value="2POREKCHANEL"/>
</dbReference>
<dbReference type="PRINTS" id="PR01096">
    <property type="entry name" value="TWIK1CHANNEL"/>
</dbReference>
<dbReference type="PRINTS" id="PR01586">
    <property type="entry name" value="TWIKCHANNEL"/>
</dbReference>
<dbReference type="SUPFAM" id="SSF81324">
    <property type="entry name" value="Voltage-gated potassium channels"/>
    <property type="match status" value="2"/>
</dbReference>
<keyword id="KW-1003">Cell membrane</keyword>
<keyword id="KW-0966">Cell projection</keyword>
<keyword id="KW-0968">Cytoplasmic vesicle</keyword>
<keyword id="KW-1015">Disulfide bond</keyword>
<keyword id="KW-0967">Endosome</keyword>
<keyword id="KW-0325">Glycoprotein</keyword>
<keyword id="KW-0407">Ion channel</keyword>
<keyword id="KW-0406">Ion transport</keyword>
<keyword id="KW-1017">Isopeptide bond</keyword>
<keyword id="KW-0472">Membrane</keyword>
<keyword id="KW-0630">Potassium</keyword>
<keyword id="KW-0631">Potassium channel</keyword>
<keyword id="KW-0633">Potassium transport</keyword>
<keyword id="KW-1185">Reference proteome</keyword>
<keyword id="KW-0770">Synapse</keyword>
<keyword id="KW-0812">Transmembrane</keyword>
<keyword id="KW-1133">Transmembrane helix</keyword>
<keyword id="KW-0813">Transport</keyword>
<keyword id="KW-0832">Ubl conjugation</keyword>